<organism>
    <name type="scientific">Syntrophotalea carbinolica (strain DSM 2380 / NBRC 103641 / GraBd1)</name>
    <name type="common">Pelobacter carbinolicus</name>
    <dbReference type="NCBI Taxonomy" id="338963"/>
    <lineage>
        <taxon>Bacteria</taxon>
        <taxon>Pseudomonadati</taxon>
        <taxon>Thermodesulfobacteriota</taxon>
        <taxon>Desulfuromonadia</taxon>
        <taxon>Desulfuromonadales</taxon>
        <taxon>Syntrophotaleaceae</taxon>
        <taxon>Syntrophotalea</taxon>
    </lineage>
</organism>
<sequence>MTRSLLWQMVIVLGAILMVNYVLTTLTPQTQEPVVDVSYSRFKTELAADNVAAITFEGNNVVGNLRERTILNRVEGTEEVQSFLRFRTTMPPVTDTRLLDDLEQRKVDVKVRPESKPSPWATAMIYMLPWLLIVGVWWFVIKGMRTRQGPGGGMMGGFSKSGAKMYTKERSRVTFADVAGLDEAKQELMEIIEFLRNPKKFMRLGAKAPRGVLLVGPPGTGKTLMARAVAGEAEVPFFTISASQFIEMFVGVGASRVRDLFNNAKKNAPSIIFIDELDAVGRSRGTGLGGGNDEREQTLNQLLSEMDGFEAHDEVIVMSATNRPDVLDPALLRPGRFDRQVTVERPDWRAREEILKVHTRQVPIDEDVDLQIIARSTPGMCGADLENLVNEAALIAARENAQKVTMQHFEQAKDRVLMGTERKLVMSQQEKRITAYHEAGHTLLARLSPGADPIHKVSIIPRGQALGVTQQLPVDDRYHYSRSYLMTRIAVSLGGRAAEKAIFEEYSTGAQNDLKQATDLAEKMVCQWGMSERVGPMSINRGEEHPFLGRKLASDNAFSQHMAWIIDQEIEKVVKAGEQAADEIIANHLPVLKKLADALLEEEVLDRTRVDEVLRETGIEVQDDPAAHPDGDHVLQGELAGGAVEG</sequence>
<gene>
    <name evidence="1" type="primary">ftsH</name>
    <name type="ordered locus">Pcar_1229</name>
</gene>
<keyword id="KW-0067">ATP-binding</keyword>
<keyword id="KW-0997">Cell inner membrane</keyword>
<keyword id="KW-1003">Cell membrane</keyword>
<keyword id="KW-0378">Hydrolase</keyword>
<keyword id="KW-0472">Membrane</keyword>
<keyword id="KW-0479">Metal-binding</keyword>
<keyword id="KW-0482">Metalloprotease</keyword>
<keyword id="KW-0547">Nucleotide-binding</keyword>
<keyword id="KW-0645">Protease</keyword>
<keyword id="KW-1185">Reference proteome</keyword>
<keyword id="KW-0812">Transmembrane</keyword>
<keyword id="KW-1133">Transmembrane helix</keyword>
<keyword id="KW-0862">Zinc</keyword>
<protein>
    <recommendedName>
        <fullName evidence="1">ATP-dependent zinc metalloprotease FtsH</fullName>
        <ecNumber evidence="1">3.4.24.-</ecNumber>
    </recommendedName>
</protein>
<evidence type="ECO:0000255" key="1">
    <source>
        <dbReference type="HAMAP-Rule" id="MF_01458"/>
    </source>
</evidence>
<proteinExistence type="inferred from homology"/>
<name>FTSH_SYNC1</name>
<accession>Q3A579</accession>
<dbReference type="EC" id="3.4.24.-" evidence="1"/>
<dbReference type="EMBL" id="CP000142">
    <property type="protein sequence ID" value="ABA88478.1"/>
    <property type="molecule type" value="Genomic_DNA"/>
</dbReference>
<dbReference type="RefSeq" id="WP_011340952.1">
    <property type="nucleotide sequence ID" value="NC_007498.2"/>
</dbReference>
<dbReference type="SMR" id="Q3A579"/>
<dbReference type="STRING" id="338963.Pcar_1229"/>
<dbReference type="KEGG" id="pca:Pcar_1229"/>
<dbReference type="eggNOG" id="COG0465">
    <property type="taxonomic scope" value="Bacteria"/>
</dbReference>
<dbReference type="HOGENOM" id="CLU_000688_16_2_7"/>
<dbReference type="OrthoDB" id="9809379at2"/>
<dbReference type="Proteomes" id="UP000002534">
    <property type="component" value="Chromosome"/>
</dbReference>
<dbReference type="GO" id="GO:0005886">
    <property type="term" value="C:plasma membrane"/>
    <property type="evidence" value="ECO:0007669"/>
    <property type="project" value="UniProtKB-SubCell"/>
</dbReference>
<dbReference type="GO" id="GO:0005524">
    <property type="term" value="F:ATP binding"/>
    <property type="evidence" value="ECO:0007669"/>
    <property type="project" value="UniProtKB-UniRule"/>
</dbReference>
<dbReference type="GO" id="GO:0016887">
    <property type="term" value="F:ATP hydrolysis activity"/>
    <property type="evidence" value="ECO:0007669"/>
    <property type="project" value="UniProtKB-UniRule"/>
</dbReference>
<dbReference type="GO" id="GO:0004176">
    <property type="term" value="F:ATP-dependent peptidase activity"/>
    <property type="evidence" value="ECO:0007669"/>
    <property type="project" value="InterPro"/>
</dbReference>
<dbReference type="GO" id="GO:0004222">
    <property type="term" value="F:metalloendopeptidase activity"/>
    <property type="evidence" value="ECO:0007669"/>
    <property type="project" value="InterPro"/>
</dbReference>
<dbReference type="GO" id="GO:0008270">
    <property type="term" value="F:zinc ion binding"/>
    <property type="evidence" value="ECO:0007669"/>
    <property type="project" value="UniProtKB-UniRule"/>
</dbReference>
<dbReference type="GO" id="GO:0030163">
    <property type="term" value="P:protein catabolic process"/>
    <property type="evidence" value="ECO:0007669"/>
    <property type="project" value="UniProtKB-UniRule"/>
</dbReference>
<dbReference type="GO" id="GO:0006508">
    <property type="term" value="P:proteolysis"/>
    <property type="evidence" value="ECO:0007669"/>
    <property type="project" value="UniProtKB-KW"/>
</dbReference>
<dbReference type="CDD" id="cd19501">
    <property type="entry name" value="RecA-like_FtsH"/>
    <property type="match status" value="1"/>
</dbReference>
<dbReference type="FunFam" id="1.10.8.60:FF:000001">
    <property type="entry name" value="ATP-dependent zinc metalloprotease FtsH"/>
    <property type="match status" value="1"/>
</dbReference>
<dbReference type="FunFam" id="1.20.58.760:FF:000001">
    <property type="entry name" value="ATP-dependent zinc metalloprotease FtsH"/>
    <property type="match status" value="1"/>
</dbReference>
<dbReference type="FunFam" id="3.40.50.300:FF:000001">
    <property type="entry name" value="ATP-dependent zinc metalloprotease FtsH"/>
    <property type="match status" value="1"/>
</dbReference>
<dbReference type="Gene3D" id="1.10.8.60">
    <property type="match status" value="1"/>
</dbReference>
<dbReference type="Gene3D" id="3.30.720.210">
    <property type="match status" value="1"/>
</dbReference>
<dbReference type="Gene3D" id="3.40.50.300">
    <property type="entry name" value="P-loop containing nucleotide triphosphate hydrolases"/>
    <property type="match status" value="1"/>
</dbReference>
<dbReference type="Gene3D" id="1.20.58.760">
    <property type="entry name" value="Peptidase M41"/>
    <property type="match status" value="1"/>
</dbReference>
<dbReference type="HAMAP" id="MF_01458">
    <property type="entry name" value="FtsH"/>
    <property type="match status" value="1"/>
</dbReference>
<dbReference type="InterPro" id="IPR003593">
    <property type="entry name" value="AAA+_ATPase"/>
</dbReference>
<dbReference type="InterPro" id="IPR041569">
    <property type="entry name" value="AAA_lid_3"/>
</dbReference>
<dbReference type="InterPro" id="IPR003959">
    <property type="entry name" value="ATPase_AAA_core"/>
</dbReference>
<dbReference type="InterPro" id="IPR003960">
    <property type="entry name" value="ATPase_AAA_CS"/>
</dbReference>
<dbReference type="InterPro" id="IPR005936">
    <property type="entry name" value="FtsH"/>
</dbReference>
<dbReference type="InterPro" id="IPR027417">
    <property type="entry name" value="P-loop_NTPase"/>
</dbReference>
<dbReference type="InterPro" id="IPR011546">
    <property type="entry name" value="Pept_M41_FtsH_extracell"/>
</dbReference>
<dbReference type="InterPro" id="IPR000642">
    <property type="entry name" value="Peptidase_M41"/>
</dbReference>
<dbReference type="InterPro" id="IPR037219">
    <property type="entry name" value="Peptidase_M41-like"/>
</dbReference>
<dbReference type="NCBIfam" id="TIGR01241">
    <property type="entry name" value="FtsH_fam"/>
    <property type="match status" value="1"/>
</dbReference>
<dbReference type="PANTHER" id="PTHR23076:SF97">
    <property type="entry name" value="ATP-DEPENDENT ZINC METALLOPROTEASE YME1L1"/>
    <property type="match status" value="1"/>
</dbReference>
<dbReference type="PANTHER" id="PTHR23076">
    <property type="entry name" value="METALLOPROTEASE M41 FTSH"/>
    <property type="match status" value="1"/>
</dbReference>
<dbReference type="Pfam" id="PF00004">
    <property type="entry name" value="AAA"/>
    <property type="match status" value="1"/>
</dbReference>
<dbReference type="Pfam" id="PF17862">
    <property type="entry name" value="AAA_lid_3"/>
    <property type="match status" value="1"/>
</dbReference>
<dbReference type="Pfam" id="PF06480">
    <property type="entry name" value="FtsH_ext"/>
    <property type="match status" value="1"/>
</dbReference>
<dbReference type="Pfam" id="PF01434">
    <property type="entry name" value="Peptidase_M41"/>
    <property type="match status" value="1"/>
</dbReference>
<dbReference type="SMART" id="SM00382">
    <property type="entry name" value="AAA"/>
    <property type="match status" value="1"/>
</dbReference>
<dbReference type="SUPFAM" id="SSF140990">
    <property type="entry name" value="FtsH protease domain-like"/>
    <property type="match status" value="1"/>
</dbReference>
<dbReference type="SUPFAM" id="SSF52540">
    <property type="entry name" value="P-loop containing nucleoside triphosphate hydrolases"/>
    <property type="match status" value="1"/>
</dbReference>
<dbReference type="PROSITE" id="PS00674">
    <property type="entry name" value="AAA"/>
    <property type="match status" value="1"/>
</dbReference>
<reference key="1">
    <citation type="submission" date="2005-10" db="EMBL/GenBank/DDBJ databases">
        <title>Complete sequence of Pelobacter carbinolicus DSM 2380.</title>
        <authorList>
            <person name="Copeland A."/>
            <person name="Lucas S."/>
            <person name="Lapidus A."/>
            <person name="Barry K."/>
            <person name="Detter J.C."/>
            <person name="Glavina T."/>
            <person name="Hammon N."/>
            <person name="Israni S."/>
            <person name="Pitluck S."/>
            <person name="Chertkov O."/>
            <person name="Schmutz J."/>
            <person name="Larimer F."/>
            <person name="Land M."/>
            <person name="Kyrpides N."/>
            <person name="Ivanova N."/>
            <person name="Richardson P."/>
        </authorList>
    </citation>
    <scope>NUCLEOTIDE SEQUENCE [LARGE SCALE GENOMIC DNA]</scope>
    <source>
        <strain>DSM 2380 / NBRC 103641 / GraBd1</strain>
    </source>
</reference>
<feature type="chain" id="PRO_0000400368" description="ATP-dependent zinc metalloprotease FtsH">
    <location>
        <begin position="1"/>
        <end position="646"/>
    </location>
</feature>
<feature type="topological domain" description="Cytoplasmic" evidence="1">
    <location>
        <begin position="1"/>
        <end position="4"/>
    </location>
</feature>
<feature type="transmembrane region" description="Helical" evidence="1">
    <location>
        <begin position="5"/>
        <end position="25"/>
    </location>
</feature>
<feature type="topological domain" description="Periplasmic" evidence="1">
    <location>
        <begin position="26"/>
        <end position="120"/>
    </location>
</feature>
<feature type="transmembrane region" description="Helical" evidence="1">
    <location>
        <begin position="121"/>
        <end position="141"/>
    </location>
</feature>
<feature type="topological domain" description="Cytoplasmic" evidence="1">
    <location>
        <begin position="142"/>
        <end position="646"/>
    </location>
</feature>
<feature type="active site" evidence="1">
    <location>
        <position position="438"/>
    </location>
</feature>
<feature type="binding site" evidence="1">
    <location>
        <begin position="216"/>
        <end position="223"/>
    </location>
    <ligand>
        <name>ATP</name>
        <dbReference type="ChEBI" id="CHEBI:30616"/>
    </ligand>
</feature>
<feature type="binding site" evidence="1">
    <location>
        <position position="437"/>
    </location>
    <ligand>
        <name>Zn(2+)</name>
        <dbReference type="ChEBI" id="CHEBI:29105"/>
        <note>catalytic</note>
    </ligand>
</feature>
<feature type="binding site" evidence="1">
    <location>
        <position position="441"/>
    </location>
    <ligand>
        <name>Zn(2+)</name>
        <dbReference type="ChEBI" id="CHEBI:29105"/>
        <note>catalytic</note>
    </ligand>
</feature>
<feature type="binding site" evidence="1">
    <location>
        <position position="513"/>
    </location>
    <ligand>
        <name>Zn(2+)</name>
        <dbReference type="ChEBI" id="CHEBI:29105"/>
        <note>catalytic</note>
    </ligand>
</feature>
<comment type="function">
    <text evidence="1">Acts as a processive, ATP-dependent zinc metallopeptidase for both cytoplasmic and membrane proteins. Plays a role in the quality control of integral membrane proteins.</text>
</comment>
<comment type="cofactor">
    <cofactor evidence="1">
        <name>Zn(2+)</name>
        <dbReference type="ChEBI" id="CHEBI:29105"/>
    </cofactor>
    <text evidence="1">Binds 1 zinc ion per subunit.</text>
</comment>
<comment type="subunit">
    <text evidence="1">Homohexamer.</text>
</comment>
<comment type="subcellular location">
    <subcellularLocation>
        <location evidence="1">Cell inner membrane</location>
        <topology evidence="1">Multi-pass membrane protein</topology>
        <orientation evidence="1">Cytoplasmic side</orientation>
    </subcellularLocation>
</comment>
<comment type="similarity">
    <text evidence="1">In the central section; belongs to the AAA ATPase family.</text>
</comment>
<comment type="similarity">
    <text evidence="1">In the C-terminal section; belongs to the peptidase M41 family.</text>
</comment>